<keyword id="KW-0520">NAD</keyword>
<keyword id="KW-0560">Oxidoreductase</keyword>
<keyword id="KW-0816">Tricarboxylic acid cycle</keyword>
<sequence length="320" mass="33617">MARNKIALIGAGQIGGTLALLAGLKDLGDVVLFDIVDGVPQGKALDIAEAAPVEGFDARYAGASDYAAIKDADVVIVTAGVPRKPGMSRDDLIGINLKVMQAVGEGIKTHAPNAFVICITNPLDAMVWALQKFSGVPTNKIVGMAGVLDSARFRHFLAEEFKVSVEDVTAFVLGGHGDDMVPLTRYSTVAGVPLTDLVKLGWTTQEKLDAMVERTRKGGGEIVNLLKTGSAFYAPAASAIAMAESYLRDKKRVLPCAAYLDGQYGVKGMFIGVPIVIGANGVERVLEVTFDDAEKAMFDKSVASVTGLIEACKGVDSNLA</sequence>
<proteinExistence type="inferred from homology"/>
<evidence type="ECO:0000255" key="1">
    <source>
        <dbReference type="HAMAP-Rule" id="MF_00487"/>
    </source>
</evidence>
<gene>
    <name evidence="1" type="primary">mdh</name>
    <name type="ordered locus">Mrad2831_0919</name>
</gene>
<accession>B1LZN1</accession>
<name>MDH_METRJ</name>
<organism>
    <name type="scientific">Methylobacterium radiotolerans (strain ATCC 27329 / DSM 1819 / JCM 2831 / NBRC 15690 / NCIMB 10815 / 0-1)</name>
    <dbReference type="NCBI Taxonomy" id="426355"/>
    <lineage>
        <taxon>Bacteria</taxon>
        <taxon>Pseudomonadati</taxon>
        <taxon>Pseudomonadota</taxon>
        <taxon>Alphaproteobacteria</taxon>
        <taxon>Hyphomicrobiales</taxon>
        <taxon>Methylobacteriaceae</taxon>
        <taxon>Methylobacterium</taxon>
    </lineage>
</organism>
<reference key="1">
    <citation type="submission" date="2008-03" db="EMBL/GenBank/DDBJ databases">
        <title>Complete sequence of chromosome of Methylobacterium radiotolerans JCM 2831.</title>
        <authorList>
            <consortium name="US DOE Joint Genome Institute"/>
            <person name="Copeland A."/>
            <person name="Lucas S."/>
            <person name="Lapidus A."/>
            <person name="Glavina del Rio T."/>
            <person name="Dalin E."/>
            <person name="Tice H."/>
            <person name="Bruce D."/>
            <person name="Goodwin L."/>
            <person name="Pitluck S."/>
            <person name="Kiss H."/>
            <person name="Brettin T."/>
            <person name="Detter J.C."/>
            <person name="Han C."/>
            <person name="Kuske C.R."/>
            <person name="Schmutz J."/>
            <person name="Larimer F."/>
            <person name="Land M."/>
            <person name="Hauser L."/>
            <person name="Kyrpides N."/>
            <person name="Mikhailova N."/>
            <person name="Marx C.J."/>
            <person name="Richardson P."/>
        </authorList>
    </citation>
    <scope>NUCLEOTIDE SEQUENCE [LARGE SCALE GENOMIC DNA]</scope>
    <source>
        <strain>ATCC 27329 / DSM 1819 / JCM 2831 / NBRC 15690 / NCIMB 10815 / 0-1</strain>
    </source>
</reference>
<protein>
    <recommendedName>
        <fullName evidence="1">Malate dehydrogenase</fullName>
        <ecNumber evidence="1">1.1.1.37</ecNumber>
    </recommendedName>
</protein>
<comment type="function">
    <text evidence="1">Catalyzes the reversible oxidation of malate to oxaloacetate.</text>
</comment>
<comment type="catalytic activity">
    <reaction evidence="1">
        <text>(S)-malate + NAD(+) = oxaloacetate + NADH + H(+)</text>
        <dbReference type="Rhea" id="RHEA:21432"/>
        <dbReference type="ChEBI" id="CHEBI:15378"/>
        <dbReference type="ChEBI" id="CHEBI:15589"/>
        <dbReference type="ChEBI" id="CHEBI:16452"/>
        <dbReference type="ChEBI" id="CHEBI:57540"/>
        <dbReference type="ChEBI" id="CHEBI:57945"/>
        <dbReference type="EC" id="1.1.1.37"/>
    </reaction>
</comment>
<comment type="similarity">
    <text evidence="1">Belongs to the LDH/MDH superfamily. MDH type 3 family.</text>
</comment>
<dbReference type="EC" id="1.1.1.37" evidence="1"/>
<dbReference type="EMBL" id="CP001001">
    <property type="protein sequence ID" value="ACB22929.1"/>
    <property type="molecule type" value="Genomic_DNA"/>
</dbReference>
<dbReference type="RefSeq" id="WP_012317922.1">
    <property type="nucleotide sequence ID" value="NC_010505.1"/>
</dbReference>
<dbReference type="SMR" id="B1LZN1"/>
<dbReference type="STRING" id="426355.Mrad2831_0919"/>
<dbReference type="GeneID" id="6136935"/>
<dbReference type="KEGG" id="mrd:Mrad2831_0919"/>
<dbReference type="eggNOG" id="COG0039">
    <property type="taxonomic scope" value="Bacteria"/>
</dbReference>
<dbReference type="HOGENOM" id="CLU_045401_2_1_5"/>
<dbReference type="OrthoDB" id="9802969at2"/>
<dbReference type="Proteomes" id="UP000006589">
    <property type="component" value="Chromosome"/>
</dbReference>
<dbReference type="GO" id="GO:0004459">
    <property type="term" value="F:L-lactate dehydrogenase activity"/>
    <property type="evidence" value="ECO:0007669"/>
    <property type="project" value="TreeGrafter"/>
</dbReference>
<dbReference type="GO" id="GO:0030060">
    <property type="term" value="F:L-malate dehydrogenase (NAD+) activity"/>
    <property type="evidence" value="ECO:0007669"/>
    <property type="project" value="UniProtKB-UniRule"/>
</dbReference>
<dbReference type="GO" id="GO:0006089">
    <property type="term" value="P:lactate metabolic process"/>
    <property type="evidence" value="ECO:0007669"/>
    <property type="project" value="TreeGrafter"/>
</dbReference>
<dbReference type="GO" id="GO:0006099">
    <property type="term" value="P:tricarboxylic acid cycle"/>
    <property type="evidence" value="ECO:0007669"/>
    <property type="project" value="UniProtKB-UniRule"/>
</dbReference>
<dbReference type="CDD" id="cd01339">
    <property type="entry name" value="LDH-like_MDH"/>
    <property type="match status" value="1"/>
</dbReference>
<dbReference type="FunFam" id="3.40.50.720:FF:000018">
    <property type="entry name" value="Malate dehydrogenase"/>
    <property type="match status" value="1"/>
</dbReference>
<dbReference type="FunFam" id="3.90.110.10:FF:000004">
    <property type="entry name" value="Malate dehydrogenase"/>
    <property type="match status" value="1"/>
</dbReference>
<dbReference type="Gene3D" id="3.90.110.10">
    <property type="entry name" value="Lactate dehydrogenase/glycoside hydrolase, family 4, C-terminal"/>
    <property type="match status" value="1"/>
</dbReference>
<dbReference type="Gene3D" id="3.40.50.720">
    <property type="entry name" value="NAD(P)-binding Rossmann-like Domain"/>
    <property type="match status" value="1"/>
</dbReference>
<dbReference type="HAMAP" id="MF_00487">
    <property type="entry name" value="Malate_dehydrog_3"/>
    <property type="match status" value="1"/>
</dbReference>
<dbReference type="InterPro" id="IPR001557">
    <property type="entry name" value="L-lactate/malate_DH"/>
</dbReference>
<dbReference type="InterPro" id="IPR022383">
    <property type="entry name" value="Lactate/malate_DH_C"/>
</dbReference>
<dbReference type="InterPro" id="IPR001236">
    <property type="entry name" value="Lactate/malate_DH_N"/>
</dbReference>
<dbReference type="InterPro" id="IPR015955">
    <property type="entry name" value="Lactate_DH/Glyco_Ohase_4_C"/>
</dbReference>
<dbReference type="InterPro" id="IPR011275">
    <property type="entry name" value="Malate_DH_type3"/>
</dbReference>
<dbReference type="InterPro" id="IPR036291">
    <property type="entry name" value="NAD(P)-bd_dom_sf"/>
</dbReference>
<dbReference type="NCBIfam" id="TIGR01763">
    <property type="entry name" value="MalateDH_bact"/>
    <property type="match status" value="1"/>
</dbReference>
<dbReference type="NCBIfam" id="NF004863">
    <property type="entry name" value="PRK06223.1"/>
    <property type="match status" value="1"/>
</dbReference>
<dbReference type="PANTHER" id="PTHR43128">
    <property type="entry name" value="L-2-HYDROXYCARBOXYLATE DEHYDROGENASE (NAD(P)(+))"/>
    <property type="match status" value="1"/>
</dbReference>
<dbReference type="PANTHER" id="PTHR43128:SF16">
    <property type="entry name" value="L-LACTATE DEHYDROGENASE"/>
    <property type="match status" value="1"/>
</dbReference>
<dbReference type="Pfam" id="PF02866">
    <property type="entry name" value="Ldh_1_C"/>
    <property type="match status" value="1"/>
</dbReference>
<dbReference type="Pfam" id="PF00056">
    <property type="entry name" value="Ldh_1_N"/>
    <property type="match status" value="1"/>
</dbReference>
<dbReference type="PIRSF" id="PIRSF000102">
    <property type="entry name" value="Lac_mal_DH"/>
    <property type="match status" value="1"/>
</dbReference>
<dbReference type="PRINTS" id="PR00086">
    <property type="entry name" value="LLDHDRGNASE"/>
</dbReference>
<dbReference type="SUPFAM" id="SSF56327">
    <property type="entry name" value="LDH C-terminal domain-like"/>
    <property type="match status" value="1"/>
</dbReference>
<dbReference type="SUPFAM" id="SSF51735">
    <property type="entry name" value="NAD(P)-binding Rossmann-fold domains"/>
    <property type="match status" value="1"/>
</dbReference>
<feature type="chain" id="PRO_1000126140" description="Malate dehydrogenase">
    <location>
        <begin position="1"/>
        <end position="320"/>
    </location>
</feature>
<feature type="active site" description="Proton acceptor" evidence="1">
    <location>
        <position position="176"/>
    </location>
</feature>
<feature type="binding site" evidence="1">
    <location>
        <begin position="10"/>
        <end position="15"/>
    </location>
    <ligand>
        <name>NAD(+)</name>
        <dbReference type="ChEBI" id="CHEBI:57540"/>
    </ligand>
</feature>
<feature type="binding site" evidence="1">
    <location>
        <position position="34"/>
    </location>
    <ligand>
        <name>NAD(+)</name>
        <dbReference type="ChEBI" id="CHEBI:57540"/>
    </ligand>
</feature>
<feature type="binding site" evidence="1">
    <location>
        <position position="83"/>
    </location>
    <ligand>
        <name>substrate</name>
    </ligand>
</feature>
<feature type="binding site" evidence="1">
    <location>
        <position position="89"/>
    </location>
    <ligand>
        <name>substrate</name>
    </ligand>
</feature>
<feature type="binding site" evidence="1">
    <location>
        <position position="96"/>
    </location>
    <ligand>
        <name>NAD(+)</name>
        <dbReference type="ChEBI" id="CHEBI:57540"/>
    </ligand>
</feature>
<feature type="binding site" evidence="1">
    <location>
        <begin position="119"/>
        <end position="121"/>
    </location>
    <ligand>
        <name>NAD(+)</name>
        <dbReference type="ChEBI" id="CHEBI:57540"/>
    </ligand>
</feature>
<feature type="binding site" evidence="1">
    <location>
        <position position="121"/>
    </location>
    <ligand>
        <name>substrate</name>
    </ligand>
</feature>
<feature type="binding site" evidence="1">
    <location>
        <position position="152"/>
    </location>
    <ligand>
        <name>substrate</name>
    </ligand>
</feature>